<dbReference type="EC" id="1.17.7.3" evidence="1"/>
<dbReference type="EMBL" id="AE016823">
    <property type="protein sequence ID" value="AAS69566.1"/>
    <property type="molecule type" value="Genomic_DNA"/>
</dbReference>
<dbReference type="RefSeq" id="WP_001011583.1">
    <property type="nucleotide sequence ID" value="NC_005823.1"/>
</dbReference>
<dbReference type="GeneID" id="61144280"/>
<dbReference type="KEGG" id="lic:LIC_10955"/>
<dbReference type="HOGENOM" id="CLU_012689_0_0_12"/>
<dbReference type="UniPathway" id="UPA00056">
    <property type="reaction ID" value="UER00096"/>
</dbReference>
<dbReference type="Proteomes" id="UP000007037">
    <property type="component" value="Chromosome I"/>
</dbReference>
<dbReference type="GO" id="GO:0051539">
    <property type="term" value="F:4 iron, 4 sulfur cluster binding"/>
    <property type="evidence" value="ECO:0007669"/>
    <property type="project" value="UniProtKB-UniRule"/>
</dbReference>
<dbReference type="GO" id="GO:0046429">
    <property type="term" value="F:4-hydroxy-3-methylbut-2-en-1-yl diphosphate synthase activity (ferredoxin)"/>
    <property type="evidence" value="ECO:0007669"/>
    <property type="project" value="UniProtKB-UniRule"/>
</dbReference>
<dbReference type="GO" id="GO:0141197">
    <property type="term" value="F:4-hydroxy-3-methylbut-2-enyl-diphosphate synthase activity (flavodoxin)"/>
    <property type="evidence" value="ECO:0007669"/>
    <property type="project" value="UniProtKB-EC"/>
</dbReference>
<dbReference type="GO" id="GO:0005506">
    <property type="term" value="F:iron ion binding"/>
    <property type="evidence" value="ECO:0007669"/>
    <property type="project" value="InterPro"/>
</dbReference>
<dbReference type="GO" id="GO:0019288">
    <property type="term" value="P:isopentenyl diphosphate biosynthetic process, methylerythritol 4-phosphate pathway"/>
    <property type="evidence" value="ECO:0007669"/>
    <property type="project" value="UniProtKB-UniRule"/>
</dbReference>
<dbReference type="GO" id="GO:0016114">
    <property type="term" value="P:terpenoid biosynthetic process"/>
    <property type="evidence" value="ECO:0007669"/>
    <property type="project" value="InterPro"/>
</dbReference>
<dbReference type="FunFam" id="3.20.20.20:FF:000005">
    <property type="entry name" value="4-hydroxy-3-methylbut-2-en-1-yl diphosphate synthase (flavodoxin)"/>
    <property type="match status" value="1"/>
</dbReference>
<dbReference type="FunFam" id="3.30.413.10:FF:000006">
    <property type="entry name" value="4-hydroxy-3-methylbut-2-en-1-yl diphosphate synthase (flavodoxin)"/>
    <property type="match status" value="1"/>
</dbReference>
<dbReference type="Gene3D" id="3.20.20.20">
    <property type="entry name" value="Dihydropteroate synthase-like"/>
    <property type="match status" value="2"/>
</dbReference>
<dbReference type="Gene3D" id="3.30.413.10">
    <property type="entry name" value="Sulfite Reductase Hemoprotein, domain 1"/>
    <property type="match status" value="1"/>
</dbReference>
<dbReference type="HAMAP" id="MF_00159">
    <property type="entry name" value="IspG"/>
    <property type="match status" value="1"/>
</dbReference>
<dbReference type="InterPro" id="IPR011005">
    <property type="entry name" value="Dihydropteroate_synth-like_sf"/>
</dbReference>
<dbReference type="InterPro" id="IPR017178">
    <property type="entry name" value="IspG_atypical"/>
</dbReference>
<dbReference type="InterPro" id="IPR004588">
    <property type="entry name" value="IspG_bac-typ"/>
</dbReference>
<dbReference type="InterPro" id="IPR045854">
    <property type="entry name" value="NO2/SO3_Rdtase_4Fe4S_sf"/>
</dbReference>
<dbReference type="NCBIfam" id="TIGR00612">
    <property type="entry name" value="ispG_gcpE"/>
    <property type="match status" value="1"/>
</dbReference>
<dbReference type="PANTHER" id="PTHR30454">
    <property type="entry name" value="4-HYDROXY-3-METHYLBUT-2-EN-1-YL DIPHOSPHATE SYNTHASE"/>
    <property type="match status" value="1"/>
</dbReference>
<dbReference type="PANTHER" id="PTHR30454:SF0">
    <property type="entry name" value="4-HYDROXY-3-METHYLBUT-2-EN-1-YL DIPHOSPHATE SYNTHASE (FERREDOXIN), CHLOROPLASTIC"/>
    <property type="match status" value="1"/>
</dbReference>
<dbReference type="Pfam" id="PF04551">
    <property type="entry name" value="GcpE"/>
    <property type="match status" value="2"/>
</dbReference>
<dbReference type="PIRSF" id="PIRSF037336">
    <property type="entry name" value="IspG_like"/>
    <property type="match status" value="1"/>
</dbReference>
<dbReference type="SUPFAM" id="SSF51717">
    <property type="entry name" value="Dihydropteroate synthetase-like"/>
    <property type="match status" value="1"/>
</dbReference>
<dbReference type="SUPFAM" id="SSF56014">
    <property type="entry name" value="Nitrite and sulphite reductase 4Fe-4S domain-like"/>
    <property type="match status" value="1"/>
</dbReference>
<feature type="chain" id="PRO_0000190591" description="4-hydroxy-3-methylbut-2-en-1-yl diphosphate synthase (flavodoxin)">
    <location>
        <begin position="1"/>
        <end position="663"/>
    </location>
</feature>
<feature type="binding site" evidence="1">
    <location>
        <position position="568"/>
    </location>
    <ligand>
        <name>[4Fe-4S] cluster</name>
        <dbReference type="ChEBI" id="CHEBI:49883"/>
    </ligand>
</feature>
<feature type="binding site" evidence="1">
    <location>
        <position position="571"/>
    </location>
    <ligand>
        <name>[4Fe-4S] cluster</name>
        <dbReference type="ChEBI" id="CHEBI:49883"/>
    </ligand>
</feature>
<feature type="binding site" evidence="1">
    <location>
        <position position="602"/>
    </location>
    <ligand>
        <name>[4Fe-4S] cluster</name>
        <dbReference type="ChEBI" id="CHEBI:49883"/>
    </ligand>
</feature>
<feature type="binding site" evidence="1">
    <location>
        <position position="609"/>
    </location>
    <ligand>
        <name>[4Fe-4S] cluster</name>
        <dbReference type="ChEBI" id="CHEBI:49883"/>
    </ligand>
</feature>
<keyword id="KW-0004">4Fe-4S</keyword>
<keyword id="KW-0408">Iron</keyword>
<keyword id="KW-0411">Iron-sulfur</keyword>
<keyword id="KW-0414">Isoprene biosynthesis</keyword>
<keyword id="KW-0479">Metal-binding</keyword>
<keyword id="KW-0560">Oxidoreductase</keyword>
<evidence type="ECO:0000255" key="1">
    <source>
        <dbReference type="HAMAP-Rule" id="MF_00159"/>
    </source>
</evidence>
<sequence>MNFRYNQTPFGYQRRKTREVKVGDVKVGGNNPIVIQSMINSDTTDTQGSVKQILELERAGCEIVRLTVPSQADADNLPSIRQELKKAGSKVPLVADIHFTPSVAMKAVEYVEKVRINPGNFADKKKFAVRDYTDLKYNQELERISEVFSPLVLRCKELGVSMRIGTNHGSLSDRIMNRYGDTPQGMVESALEFIRIAESLGYYDIIVSMKASNPQVMVQAYRMLASRFNELKMDYPLHLGVTEAGDGNDGRIKSAIGIGSLLEDGLGDTIRVSLTEDPVLEVPVAKLLADKFNKKISNLNSVKGYSEFRNPFSYNRFYSSEIKIVQFEAGENHPVRVETILPFENSNSFLENVAKLYQYGKSLSIEPESILVDSPLPDQLKEISEAATALSIPVGILLSKNVSLNEKLQKELLSFPKIVFDPFLQFQDGEKMLSFLKERQNAGLFSEIHTSGDKLDSLRGLPDTLSEIGIKNVLFSLDSKEILYDYRKLGSILSRFEFPILLHGSFSNPEEALYNSAIGIGGLLIDGIGDLIRISTSKIKDIEEIFQLSYDLLQGTRLRLTKTEYISCPSCGRTLFDLQETTARIKSRTGHLKGVKIAVMGCIVNGPGEMADADFGYVGAGPGKVHLYRGKEIVLKNVPSEIADEKLVQLIKDNELWQDPSND</sequence>
<reference key="1">
    <citation type="journal article" date="2004" name="J. Bacteriol.">
        <title>Comparative genomics of two Leptospira interrogans serovars reveals novel insights into physiology and pathogenesis.</title>
        <authorList>
            <person name="Nascimento A.L.T.O."/>
            <person name="Ko A.I."/>
            <person name="Martins E.A.L."/>
            <person name="Monteiro-Vitorello C.B."/>
            <person name="Ho P.L."/>
            <person name="Haake D.A."/>
            <person name="Verjovski-Almeida S."/>
            <person name="Hartskeerl R.A."/>
            <person name="Marques M.V."/>
            <person name="Oliveira M.C."/>
            <person name="Menck C.F.M."/>
            <person name="Leite L.C.C."/>
            <person name="Carrer H."/>
            <person name="Coutinho L.L."/>
            <person name="Degrave W.M."/>
            <person name="Dellagostin O.A."/>
            <person name="El-Dorry H."/>
            <person name="Ferro E.S."/>
            <person name="Ferro M.I.T."/>
            <person name="Furlan L.R."/>
            <person name="Gamberini M."/>
            <person name="Giglioti E.A."/>
            <person name="Goes-Neto A."/>
            <person name="Goldman G.H."/>
            <person name="Goldman M.H.S."/>
            <person name="Harakava R."/>
            <person name="Jeronimo S.M.B."/>
            <person name="Junqueira-de-Azevedo I.L.M."/>
            <person name="Kimura E.T."/>
            <person name="Kuramae E.E."/>
            <person name="Lemos E.G.M."/>
            <person name="Lemos M.V.F."/>
            <person name="Marino C.L."/>
            <person name="Nunes L.R."/>
            <person name="de Oliveira R.C."/>
            <person name="Pereira G.G."/>
            <person name="Reis M.S."/>
            <person name="Schriefer A."/>
            <person name="Siqueira W.J."/>
            <person name="Sommer P."/>
            <person name="Tsai S.M."/>
            <person name="Simpson A.J.G."/>
            <person name="Ferro J.A."/>
            <person name="Camargo L.E.A."/>
            <person name="Kitajima J.P."/>
            <person name="Setubal J.C."/>
            <person name="Van Sluys M.A."/>
        </authorList>
    </citation>
    <scope>NUCLEOTIDE SEQUENCE [LARGE SCALE GENOMIC DNA]</scope>
    <source>
        <strain>Fiocruz L1-130</strain>
    </source>
</reference>
<comment type="function">
    <text evidence="1">Converts 2C-methyl-D-erythritol 2,4-cyclodiphosphate (ME-2,4cPP) into 1-hydroxy-2-methyl-2-(E)-butenyl 4-diphosphate.</text>
</comment>
<comment type="catalytic activity">
    <reaction evidence="1">
        <text>(2E)-4-hydroxy-3-methylbut-2-enyl diphosphate + oxidized [flavodoxin] + H2O + 2 H(+) = 2-C-methyl-D-erythritol 2,4-cyclic diphosphate + reduced [flavodoxin]</text>
        <dbReference type="Rhea" id="RHEA:43604"/>
        <dbReference type="Rhea" id="RHEA-COMP:10622"/>
        <dbReference type="Rhea" id="RHEA-COMP:10623"/>
        <dbReference type="ChEBI" id="CHEBI:15377"/>
        <dbReference type="ChEBI" id="CHEBI:15378"/>
        <dbReference type="ChEBI" id="CHEBI:57618"/>
        <dbReference type="ChEBI" id="CHEBI:58210"/>
        <dbReference type="ChEBI" id="CHEBI:58483"/>
        <dbReference type="ChEBI" id="CHEBI:128753"/>
        <dbReference type="EC" id="1.17.7.3"/>
    </reaction>
</comment>
<comment type="cofactor">
    <cofactor evidence="1">
        <name>[4Fe-4S] cluster</name>
        <dbReference type="ChEBI" id="CHEBI:49883"/>
    </cofactor>
    <text evidence="1">Binds 1 [4Fe-4S] cluster.</text>
</comment>
<comment type="pathway">
    <text evidence="1">Isoprenoid biosynthesis; isopentenyl diphosphate biosynthesis via DXP pathway; isopentenyl diphosphate from 1-deoxy-D-xylulose 5-phosphate: step 5/6.</text>
</comment>
<comment type="similarity">
    <text evidence="1">Belongs to the IspG family.</text>
</comment>
<accession>Q72TR2</accession>
<gene>
    <name evidence="1" type="primary">ispG</name>
    <name type="synonym">gcpE</name>
    <name type="ordered locus">LIC_10955</name>
</gene>
<proteinExistence type="inferred from homology"/>
<organism>
    <name type="scientific">Leptospira interrogans serogroup Icterohaemorrhagiae serovar copenhageni (strain Fiocruz L1-130)</name>
    <dbReference type="NCBI Taxonomy" id="267671"/>
    <lineage>
        <taxon>Bacteria</taxon>
        <taxon>Pseudomonadati</taxon>
        <taxon>Spirochaetota</taxon>
        <taxon>Spirochaetia</taxon>
        <taxon>Leptospirales</taxon>
        <taxon>Leptospiraceae</taxon>
        <taxon>Leptospira</taxon>
    </lineage>
</organism>
<protein>
    <recommendedName>
        <fullName evidence="1">4-hydroxy-3-methylbut-2-en-1-yl diphosphate synthase (flavodoxin)</fullName>
        <ecNumber evidence="1">1.17.7.3</ecNumber>
    </recommendedName>
    <alternativeName>
        <fullName evidence="1">1-hydroxy-2-methyl-2-(E)-butenyl 4-diphosphate synthase</fullName>
    </alternativeName>
</protein>
<name>ISPG_LEPIC</name>